<organism>
    <name type="scientific">Xenopus tropicalis</name>
    <name type="common">Western clawed frog</name>
    <name type="synonym">Silurana tropicalis</name>
    <dbReference type="NCBI Taxonomy" id="8364"/>
    <lineage>
        <taxon>Eukaryota</taxon>
        <taxon>Metazoa</taxon>
        <taxon>Chordata</taxon>
        <taxon>Craniata</taxon>
        <taxon>Vertebrata</taxon>
        <taxon>Euteleostomi</taxon>
        <taxon>Amphibia</taxon>
        <taxon>Batrachia</taxon>
        <taxon>Anura</taxon>
        <taxon>Pipoidea</taxon>
        <taxon>Pipidae</taxon>
        <taxon>Xenopodinae</taxon>
        <taxon>Xenopus</taxon>
        <taxon>Silurana</taxon>
    </lineage>
</organism>
<sequence>MYFPMIELTLVLLASSNLAMSVRKEIRAPQTLSRGWGDDISWVQTYEEGLYNAKKRNKPLMVIHHLEDCQYCQALKKVFAESDEAQTLAQEQFIMLNLMHETTDKNLSPDGQYVPRIMFIDPTLTVRADITGRYSNRRYTYEPQDLPLLIENMNKAIHLLQTEL</sequence>
<protein>
    <recommendedName>
        <fullName evidence="5">Anterior gradient protein 3</fullName>
    </recommendedName>
</protein>
<reference evidence="5" key="1">
    <citation type="submission" date="2004-06" db="EMBL/GenBank/DDBJ databases">
        <authorList>
            <consortium name="NIH - Xenopus Gene Collection (XGC) project"/>
        </authorList>
    </citation>
    <scope>NUCLEOTIDE SEQUENCE [LARGE SCALE MRNA]</scope>
    <source>
        <strain evidence="5">F6</strain>
    </source>
</reference>
<keyword id="KW-0963">Cytoplasm</keyword>
<keyword id="KW-0256">Endoplasmic reticulum</keyword>
<keyword id="KW-1185">Reference proteome</keyword>
<keyword id="KW-0732">Signal</keyword>
<name>AGR3_XENTR</name>
<dbReference type="EMBL" id="BC075325">
    <property type="protein sequence ID" value="AAH75325.1"/>
    <property type="status" value="ALT_INIT"/>
    <property type="molecule type" value="mRNA"/>
</dbReference>
<dbReference type="RefSeq" id="NP_001006909.1">
    <property type="nucleotide sequence ID" value="NM_001006908.1"/>
</dbReference>
<dbReference type="RefSeq" id="XP_012820000.1">
    <property type="nucleotide sequence ID" value="XM_012964546.3"/>
</dbReference>
<dbReference type="RefSeq" id="XP_031759179.1">
    <property type="nucleotide sequence ID" value="XM_031903319.1"/>
</dbReference>
<dbReference type="RefSeq" id="XP_031759180.1">
    <property type="nucleotide sequence ID" value="XM_031903320.1"/>
</dbReference>
<dbReference type="SMR" id="Q6DJ58"/>
<dbReference type="FunCoup" id="Q6DJ58">
    <property type="interactions" value="22"/>
</dbReference>
<dbReference type="STRING" id="8364.ENSXETP00000047086"/>
<dbReference type="PaxDb" id="8364-ENSXETP00000049321"/>
<dbReference type="GeneID" id="448756"/>
<dbReference type="KEGG" id="xtr:448756"/>
<dbReference type="AGR" id="Xenbase:XB-GENE-950741"/>
<dbReference type="CTD" id="155465"/>
<dbReference type="Xenbase" id="XB-GENE-950741">
    <property type="gene designation" value="agr3"/>
</dbReference>
<dbReference type="eggNOG" id="ENOG502R72A">
    <property type="taxonomic scope" value="Eukaryota"/>
</dbReference>
<dbReference type="HOGENOM" id="CLU_088048_1_0_1"/>
<dbReference type="InParanoid" id="Q6DJ58"/>
<dbReference type="OMA" id="PILIENM"/>
<dbReference type="OrthoDB" id="262308at2759"/>
<dbReference type="PhylomeDB" id="Q6DJ58"/>
<dbReference type="Proteomes" id="UP000008143">
    <property type="component" value="Chromosome 6"/>
</dbReference>
<dbReference type="Bgee" id="ENSXETG00000022793">
    <property type="expression patterns" value="Expressed in liver and 8 other cell types or tissues"/>
</dbReference>
<dbReference type="GO" id="GO:0005783">
    <property type="term" value="C:endoplasmic reticulum"/>
    <property type="evidence" value="ECO:0007669"/>
    <property type="project" value="UniProtKB-SubCell"/>
</dbReference>
<dbReference type="CDD" id="cd02960">
    <property type="entry name" value="AGR"/>
    <property type="match status" value="1"/>
</dbReference>
<dbReference type="FunFam" id="3.40.30.10:FF:000036">
    <property type="entry name" value="anterior gradient protein 2 homolog"/>
    <property type="match status" value="1"/>
</dbReference>
<dbReference type="Gene3D" id="3.40.30.10">
    <property type="entry name" value="Glutaredoxin"/>
    <property type="match status" value="1"/>
</dbReference>
<dbReference type="InterPro" id="IPR051099">
    <property type="entry name" value="AGR/TXD"/>
</dbReference>
<dbReference type="InterPro" id="IPR036249">
    <property type="entry name" value="Thioredoxin-like_sf"/>
</dbReference>
<dbReference type="PANTHER" id="PTHR15337:SF5">
    <property type="entry name" value="ANTERIOR GRADIENT PROTEIN 3"/>
    <property type="match status" value="1"/>
</dbReference>
<dbReference type="PANTHER" id="PTHR15337">
    <property type="entry name" value="ANTERIOR GRADIENT PROTEIN-RELATED"/>
    <property type="match status" value="1"/>
</dbReference>
<dbReference type="Pfam" id="PF13899">
    <property type="entry name" value="Thioredoxin_7"/>
    <property type="match status" value="1"/>
</dbReference>
<dbReference type="SUPFAM" id="SSF52833">
    <property type="entry name" value="Thioredoxin-like"/>
    <property type="match status" value="1"/>
</dbReference>
<accession>Q6DJ58</accession>
<comment type="function">
    <text evidence="1">Required for calcium-mediated regulation of ciliary beat frequency in the airway.</text>
</comment>
<comment type="subcellular location">
    <subcellularLocation>
        <location evidence="2">Endoplasmic reticulum</location>
    </subcellularLocation>
    <subcellularLocation>
        <location evidence="2">Cytoplasm</location>
    </subcellularLocation>
</comment>
<comment type="similarity">
    <text evidence="4">Belongs to the AGR family.</text>
</comment>
<comment type="sequence caution" evidence="4">
    <conflict type="erroneous initiation">
        <sequence resource="EMBL-CDS" id="AAH75325"/>
    </conflict>
    <text>Truncated N-terminus.</text>
</comment>
<evidence type="ECO:0000250" key="1">
    <source>
        <dbReference type="UniProtKB" id="Q8R3W7"/>
    </source>
</evidence>
<evidence type="ECO:0000250" key="2">
    <source>
        <dbReference type="UniProtKB" id="Q8TD06"/>
    </source>
</evidence>
<evidence type="ECO:0000255" key="3"/>
<evidence type="ECO:0000305" key="4"/>
<evidence type="ECO:0000312" key="5">
    <source>
        <dbReference type="EMBL" id="AAH75325.1"/>
    </source>
</evidence>
<feature type="signal peptide" evidence="3">
    <location>
        <begin position="1"/>
        <end position="19"/>
    </location>
</feature>
<feature type="chain" id="PRO_0000392581" description="Anterior gradient protein 3" evidence="3">
    <location>
        <begin position="20"/>
        <end position="164"/>
    </location>
</feature>
<feature type="short sequence motif" description="Prevents secretion from ER" evidence="4">
    <location>
        <begin position="161"/>
        <end position="164"/>
    </location>
</feature>
<gene>
    <name evidence="5" type="primary">agr3</name>
</gene>
<proteinExistence type="evidence at transcript level"/>